<gene>
    <name evidence="1" type="primary">clpX</name>
    <name type="ordered locus">AM310</name>
</gene>
<name>CLPX_ANAMM</name>
<evidence type="ECO:0000255" key="1">
    <source>
        <dbReference type="HAMAP-Rule" id="MF_00175"/>
    </source>
</evidence>
<evidence type="ECO:0000255" key="2">
    <source>
        <dbReference type="PROSITE-ProRule" id="PRU01250"/>
    </source>
</evidence>
<comment type="function">
    <text evidence="1">ATP-dependent specificity component of the Clp protease. It directs the protease to specific substrates. Can perform chaperone functions in the absence of ClpP.</text>
</comment>
<comment type="subunit">
    <text evidence="1">Component of the ClpX-ClpP complex. Forms a hexameric ring that, in the presence of ATP, binds to fourteen ClpP subunits assembled into a disk-like structure with a central cavity, resembling the structure of eukaryotic proteasomes.</text>
</comment>
<comment type="similarity">
    <text evidence="1">Belongs to the ClpX chaperone family.</text>
</comment>
<protein>
    <recommendedName>
        <fullName evidence="1">ATP-dependent Clp protease ATP-binding subunit ClpX</fullName>
    </recommendedName>
</protein>
<feature type="chain" id="PRO_1000024510" description="ATP-dependent Clp protease ATP-binding subunit ClpX">
    <location>
        <begin position="1"/>
        <end position="405"/>
    </location>
</feature>
<feature type="domain" description="ClpX-type ZB" evidence="2">
    <location>
        <begin position="1"/>
        <end position="52"/>
    </location>
</feature>
<feature type="binding site" evidence="2">
    <location>
        <position position="11"/>
    </location>
    <ligand>
        <name>Zn(2+)</name>
        <dbReference type="ChEBI" id="CHEBI:29105"/>
    </ligand>
</feature>
<feature type="binding site" evidence="2">
    <location>
        <position position="14"/>
    </location>
    <ligand>
        <name>Zn(2+)</name>
        <dbReference type="ChEBI" id="CHEBI:29105"/>
    </ligand>
</feature>
<feature type="binding site" evidence="2">
    <location>
        <position position="33"/>
    </location>
    <ligand>
        <name>Zn(2+)</name>
        <dbReference type="ChEBI" id="CHEBI:29105"/>
    </ligand>
</feature>
<feature type="binding site" evidence="2">
    <location>
        <position position="36"/>
    </location>
    <ligand>
        <name>Zn(2+)</name>
        <dbReference type="ChEBI" id="CHEBI:29105"/>
    </ligand>
</feature>
<feature type="binding site" evidence="1">
    <location>
        <begin position="113"/>
        <end position="120"/>
    </location>
    <ligand>
        <name>ATP</name>
        <dbReference type="ChEBI" id="CHEBI:30616"/>
    </ligand>
</feature>
<sequence length="405" mass="44562">MSEARKGAYSCSFCGKLHSEVRKLIAGPRVYICNECVELCSGILQEEGRPARQGGFDLKPPEIKQVLDEYVIGQEHSKKVLSVAVYNHYKRLRNSGVISEVEISKSNVLLIGPTGSGKTLLARTLARVLQVPFAMADATTLTEAGYVGEDVENILLKLLQAANFNVEAAQRGIIYIDEVDKISRKSENASITRDVSGEGVQQALLKVIEGTVSSVPPQGGRKHPHQEFIQINTDNILFIFGGAFDGLEKIIEARNRGSCMGFEANVQKIADKRKDILCYTEPEDLVKFGLIPEFVGRIPVVTSLGRLDEETLYRILVEPKNSLVKQYTKLFEMDNLELKFDNAALLAVAKKAVARNTGARGLRAIMESLLLDFMFNPLGCEGGKVVVDAAMVEDVMMSRNCFESG</sequence>
<proteinExistence type="inferred from homology"/>
<accession>Q5PBC9</accession>
<dbReference type="EMBL" id="CP000030">
    <property type="protein sequence ID" value="AAV86400.1"/>
    <property type="molecule type" value="Genomic_DNA"/>
</dbReference>
<dbReference type="SMR" id="Q5PBC9"/>
<dbReference type="KEGG" id="ama:AM310"/>
<dbReference type="HOGENOM" id="CLU_014218_8_2_5"/>
<dbReference type="GO" id="GO:0009376">
    <property type="term" value="C:HslUV protease complex"/>
    <property type="evidence" value="ECO:0007669"/>
    <property type="project" value="TreeGrafter"/>
</dbReference>
<dbReference type="GO" id="GO:0005524">
    <property type="term" value="F:ATP binding"/>
    <property type="evidence" value="ECO:0007669"/>
    <property type="project" value="UniProtKB-UniRule"/>
</dbReference>
<dbReference type="GO" id="GO:0016887">
    <property type="term" value="F:ATP hydrolysis activity"/>
    <property type="evidence" value="ECO:0007669"/>
    <property type="project" value="InterPro"/>
</dbReference>
<dbReference type="GO" id="GO:0140662">
    <property type="term" value="F:ATP-dependent protein folding chaperone"/>
    <property type="evidence" value="ECO:0007669"/>
    <property type="project" value="InterPro"/>
</dbReference>
<dbReference type="GO" id="GO:0046983">
    <property type="term" value="F:protein dimerization activity"/>
    <property type="evidence" value="ECO:0007669"/>
    <property type="project" value="InterPro"/>
</dbReference>
<dbReference type="GO" id="GO:0051082">
    <property type="term" value="F:unfolded protein binding"/>
    <property type="evidence" value="ECO:0007669"/>
    <property type="project" value="UniProtKB-UniRule"/>
</dbReference>
<dbReference type="GO" id="GO:0008270">
    <property type="term" value="F:zinc ion binding"/>
    <property type="evidence" value="ECO:0007669"/>
    <property type="project" value="InterPro"/>
</dbReference>
<dbReference type="GO" id="GO:0051301">
    <property type="term" value="P:cell division"/>
    <property type="evidence" value="ECO:0007669"/>
    <property type="project" value="TreeGrafter"/>
</dbReference>
<dbReference type="GO" id="GO:0051603">
    <property type="term" value="P:proteolysis involved in protein catabolic process"/>
    <property type="evidence" value="ECO:0007669"/>
    <property type="project" value="TreeGrafter"/>
</dbReference>
<dbReference type="CDD" id="cd19497">
    <property type="entry name" value="RecA-like_ClpX"/>
    <property type="match status" value="1"/>
</dbReference>
<dbReference type="FunFam" id="1.10.8.60:FF:000002">
    <property type="entry name" value="ATP-dependent Clp protease ATP-binding subunit ClpX"/>
    <property type="match status" value="1"/>
</dbReference>
<dbReference type="FunFam" id="3.40.50.300:FF:000005">
    <property type="entry name" value="ATP-dependent Clp protease ATP-binding subunit ClpX"/>
    <property type="match status" value="1"/>
</dbReference>
<dbReference type="Gene3D" id="1.10.8.60">
    <property type="match status" value="1"/>
</dbReference>
<dbReference type="Gene3D" id="6.20.220.10">
    <property type="entry name" value="ClpX chaperone, C4-type zinc finger domain"/>
    <property type="match status" value="1"/>
</dbReference>
<dbReference type="Gene3D" id="3.40.50.300">
    <property type="entry name" value="P-loop containing nucleotide triphosphate hydrolases"/>
    <property type="match status" value="1"/>
</dbReference>
<dbReference type="HAMAP" id="MF_00175">
    <property type="entry name" value="ClpX"/>
    <property type="match status" value="1"/>
</dbReference>
<dbReference type="InterPro" id="IPR003593">
    <property type="entry name" value="AAA+_ATPase"/>
</dbReference>
<dbReference type="InterPro" id="IPR050052">
    <property type="entry name" value="ATP-dep_Clp_protease_ClpX"/>
</dbReference>
<dbReference type="InterPro" id="IPR003959">
    <property type="entry name" value="ATPase_AAA_core"/>
</dbReference>
<dbReference type="InterPro" id="IPR019489">
    <property type="entry name" value="Clp_ATPase_C"/>
</dbReference>
<dbReference type="InterPro" id="IPR004487">
    <property type="entry name" value="Clp_protease_ATP-bd_su_ClpX"/>
</dbReference>
<dbReference type="InterPro" id="IPR046425">
    <property type="entry name" value="ClpX_bact"/>
</dbReference>
<dbReference type="InterPro" id="IPR027417">
    <property type="entry name" value="P-loop_NTPase"/>
</dbReference>
<dbReference type="InterPro" id="IPR010603">
    <property type="entry name" value="Znf_CppX_C4"/>
</dbReference>
<dbReference type="InterPro" id="IPR038366">
    <property type="entry name" value="Znf_CppX_C4_sf"/>
</dbReference>
<dbReference type="NCBIfam" id="TIGR00382">
    <property type="entry name" value="clpX"/>
    <property type="match status" value="1"/>
</dbReference>
<dbReference type="NCBIfam" id="NF003745">
    <property type="entry name" value="PRK05342.1"/>
    <property type="match status" value="1"/>
</dbReference>
<dbReference type="PANTHER" id="PTHR48102:SF7">
    <property type="entry name" value="ATP-DEPENDENT CLP PROTEASE ATP-BINDING SUBUNIT CLPX-LIKE, MITOCHONDRIAL"/>
    <property type="match status" value="1"/>
</dbReference>
<dbReference type="PANTHER" id="PTHR48102">
    <property type="entry name" value="ATP-DEPENDENT CLP PROTEASE ATP-BINDING SUBUNIT CLPX-LIKE, MITOCHONDRIAL-RELATED"/>
    <property type="match status" value="1"/>
</dbReference>
<dbReference type="Pfam" id="PF07724">
    <property type="entry name" value="AAA_2"/>
    <property type="match status" value="1"/>
</dbReference>
<dbReference type="Pfam" id="PF10431">
    <property type="entry name" value="ClpB_D2-small"/>
    <property type="match status" value="1"/>
</dbReference>
<dbReference type="Pfam" id="PF06689">
    <property type="entry name" value="zf-C4_ClpX"/>
    <property type="match status" value="1"/>
</dbReference>
<dbReference type="SMART" id="SM00382">
    <property type="entry name" value="AAA"/>
    <property type="match status" value="1"/>
</dbReference>
<dbReference type="SMART" id="SM01086">
    <property type="entry name" value="ClpB_D2-small"/>
    <property type="match status" value="1"/>
</dbReference>
<dbReference type="SMART" id="SM00994">
    <property type="entry name" value="zf-C4_ClpX"/>
    <property type="match status" value="1"/>
</dbReference>
<dbReference type="SUPFAM" id="SSF57716">
    <property type="entry name" value="Glucocorticoid receptor-like (DNA-binding domain)"/>
    <property type="match status" value="1"/>
</dbReference>
<dbReference type="SUPFAM" id="SSF52540">
    <property type="entry name" value="P-loop containing nucleoside triphosphate hydrolases"/>
    <property type="match status" value="1"/>
</dbReference>
<dbReference type="PROSITE" id="PS51902">
    <property type="entry name" value="CLPX_ZB"/>
    <property type="match status" value="1"/>
</dbReference>
<keyword id="KW-0067">ATP-binding</keyword>
<keyword id="KW-0143">Chaperone</keyword>
<keyword id="KW-0479">Metal-binding</keyword>
<keyword id="KW-0547">Nucleotide-binding</keyword>
<keyword id="KW-0862">Zinc</keyword>
<organism>
    <name type="scientific">Anaplasma marginale (strain St. Maries)</name>
    <dbReference type="NCBI Taxonomy" id="234826"/>
    <lineage>
        <taxon>Bacteria</taxon>
        <taxon>Pseudomonadati</taxon>
        <taxon>Pseudomonadota</taxon>
        <taxon>Alphaproteobacteria</taxon>
        <taxon>Rickettsiales</taxon>
        <taxon>Anaplasmataceae</taxon>
        <taxon>Anaplasma</taxon>
    </lineage>
</organism>
<reference key="1">
    <citation type="journal article" date="2005" name="Proc. Natl. Acad. Sci. U.S.A.">
        <title>Complete genome sequencing of Anaplasma marginale reveals that the surface is skewed to two superfamilies of outer membrane proteins.</title>
        <authorList>
            <person name="Brayton K.A."/>
            <person name="Kappmeyer L.S."/>
            <person name="Herndon D.R."/>
            <person name="Dark M.J."/>
            <person name="Tibbals D.L."/>
            <person name="Palmer G.H."/>
            <person name="McGuire T.C."/>
            <person name="Knowles D.P. Jr."/>
        </authorList>
    </citation>
    <scope>NUCLEOTIDE SEQUENCE [LARGE SCALE GENOMIC DNA]</scope>
    <source>
        <strain>St. Maries</strain>
    </source>
</reference>